<sequence>MFTRRAALVGAAALASAPLVIRTAGAEEAPAQLASAAPVDLSNLPRVKHTLVPPPFAHAHEQVAASGPVINEFEMRIIEKEVQLDEDAYLQAMTFDGSIPGPLMIVHEGDYVELTLINPPENTMPHNIDFHAATGALGGGGLTLINPGEKVVLRFKATRAGAFVYHCAPGGPMIPWHVVSGMAGCIMVLPRDGLKDHEGKPVRYDTVYYIGESDHYIPKDEDGTYMRFSDPSEGYEDMVAVMDTLIPSHIVFNGAVGALTGEGALKAKVGDNVLFVHSQPNRDSRPHLIGGHGDLVWETGKFHNAPERDLETWFIRGGSAGAALYKFLQPGVYAYVNHNLIEAVHKGATAHVLVEGEWDNDLMEQVVAPVGLTG</sequence>
<accession>Q53239</accession>
<accession>A4WSX4</accession>
<comment type="catalytic activity">
    <reaction>
        <text>nitric oxide + Fe(III)-[cytochrome c] + H2O = Fe(II)-[cytochrome c] + nitrite + 2 H(+)</text>
        <dbReference type="Rhea" id="RHEA:15233"/>
        <dbReference type="Rhea" id="RHEA-COMP:10350"/>
        <dbReference type="Rhea" id="RHEA-COMP:14399"/>
        <dbReference type="ChEBI" id="CHEBI:15377"/>
        <dbReference type="ChEBI" id="CHEBI:15378"/>
        <dbReference type="ChEBI" id="CHEBI:16301"/>
        <dbReference type="ChEBI" id="CHEBI:16480"/>
        <dbReference type="ChEBI" id="CHEBI:29033"/>
        <dbReference type="ChEBI" id="CHEBI:29034"/>
        <dbReference type="EC" id="1.7.2.1"/>
    </reaction>
</comment>
<comment type="cofactor">
    <cofactor evidence="1">
        <name>Cu(2+)</name>
        <dbReference type="ChEBI" id="CHEBI:29036"/>
    </cofactor>
    <text evidence="1">Binds 1 Cu(2+) ion. The Cu(2+) ion is held by residues from each of 2 monomers of the trimer. Nitrite is bound to the Cu(2+) ion site. Pseudoazurin is the physiological electron donor for the Cu-NIR in vitro.</text>
</comment>
<comment type="cofactor">
    <cofactor evidence="1">
        <name>Cu(+)</name>
        <dbReference type="ChEBI" id="CHEBI:49552"/>
    </cofactor>
    <text evidence="1">Binds 1 Cu(+) ion. The Cu(+) ion is bound within a single monomer.</text>
</comment>
<comment type="cofactor">
    <cofactor evidence="1">
        <name>FAD</name>
        <dbReference type="ChEBI" id="CHEBI:57692"/>
    </cofactor>
</comment>
<comment type="pathway">
    <text>Nitrogen metabolism; nitrate reduction (denitrification); dinitrogen from nitrate: step 2/4.</text>
</comment>
<comment type="subunit">
    <text evidence="1">Homotrimer.</text>
</comment>
<comment type="subcellular location">
    <subcellularLocation>
        <location evidence="1">Periplasm</location>
    </subcellularLocation>
</comment>
<comment type="domain">
    <text>The type I copper site in NIR plays a crucial role for electron transfer from pseudoazurin to the type II copper site of NIR, which comprises the catalytic center of NIR for the reduction of nitrite.</text>
</comment>
<comment type="PTM">
    <text>Predicted to be exported by the Tat system. The position of the signal peptide cleavage has not been experimentally proven.</text>
</comment>
<comment type="similarity">
    <text evidence="3">Belongs to the multicopper oxidase family.</text>
</comment>
<reference key="1">
    <citation type="journal article" date="1997" name="J. Bacteriol.">
        <title>Characterization and regulation of the gene encoding nitrite reductase in Rhodobacter sphaeroides 2.4.3.</title>
        <authorList>
            <person name="Tosques I.E."/>
            <person name="Kwiatkowski A.V."/>
            <person name="Shi J."/>
            <person name="Shapleigh J.P."/>
        </authorList>
    </citation>
    <scope>NUCLEOTIDE SEQUENCE [GENOMIC DNA]</scope>
</reference>
<reference key="2">
    <citation type="submission" date="2007-04" db="EMBL/GenBank/DDBJ databases">
        <title>Complete sequence of chromosome of Rhodobacter sphaeroides ATCC 17025.</title>
        <authorList>
            <consortium name="US DOE Joint Genome Institute"/>
            <person name="Copeland A."/>
            <person name="Lucas S."/>
            <person name="Lapidus A."/>
            <person name="Barry K."/>
            <person name="Detter J.C."/>
            <person name="Glavina del Rio T."/>
            <person name="Hammon N."/>
            <person name="Israni S."/>
            <person name="Dalin E."/>
            <person name="Tice H."/>
            <person name="Pitluck S."/>
            <person name="Chertkov O."/>
            <person name="Brettin T."/>
            <person name="Bruce D."/>
            <person name="Han C."/>
            <person name="Schmutz J."/>
            <person name="Larimer F."/>
            <person name="Land M."/>
            <person name="Hauser L."/>
            <person name="Kyrpides N."/>
            <person name="Kim E."/>
            <person name="Richardson P."/>
            <person name="Mackenzie C."/>
            <person name="Choudhary M."/>
            <person name="Donohue T.J."/>
            <person name="Kaplan S."/>
        </authorList>
    </citation>
    <scope>NUCLEOTIDE SEQUENCE [LARGE SCALE GENOMIC DNA]</scope>
    <source>
        <strain>ATCC 17025 / ATH 2.4.3</strain>
    </source>
</reference>
<dbReference type="EC" id="1.7.2.1"/>
<dbReference type="EMBL" id="U62291">
    <property type="protein sequence ID" value="AAB05767.1"/>
    <property type="molecule type" value="Genomic_DNA"/>
</dbReference>
<dbReference type="EMBL" id="CP000661">
    <property type="protein sequence ID" value="ABP70488.1"/>
    <property type="molecule type" value="Genomic_DNA"/>
</dbReference>
<dbReference type="PDB" id="1MZY">
    <property type="method" value="X-ray"/>
    <property type="resolution" value="1.46 A"/>
    <property type="chains" value="A=39-371"/>
</dbReference>
<dbReference type="PDB" id="1MZZ">
    <property type="method" value="X-ray"/>
    <property type="resolution" value="2.00 A"/>
    <property type="chains" value="A/B/C=39-371"/>
</dbReference>
<dbReference type="PDB" id="1N70">
    <property type="method" value="X-ray"/>
    <property type="resolution" value="1.60 A"/>
    <property type="chains" value="A=41-374"/>
</dbReference>
<dbReference type="PDB" id="1ZV2">
    <property type="method" value="X-ray"/>
    <property type="resolution" value="1.74 A"/>
    <property type="chains" value="A=44-371"/>
</dbReference>
<dbReference type="PDB" id="2A3T">
    <property type="method" value="X-ray"/>
    <property type="resolution" value="1.85 A"/>
    <property type="chains" value="A=44-371"/>
</dbReference>
<dbReference type="PDB" id="2DWS">
    <property type="method" value="X-ray"/>
    <property type="resolution" value="1.85 A"/>
    <property type="chains" value="A=44-371"/>
</dbReference>
<dbReference type="PDB" id="2DWT">
    <property type="method" value="X-ray"/>
    <property type="resolution" value="1.90 A"/>
    <property type="chains" value="A=44-372"/>
</dbReference>
<dbReference type="PDB" id="2DY2">
    <property type="method" value="X-ray"/>
    <property type="resolution" value="2.26 A"/>
    <property type="chains" value="A=44-372"/>
</dbReference>
<dbReference type="PDBsum" id="1MZY"/>
<dbReference type="PDBsum" id="1MZZ"/>
<dbReference type="PDBsum" id="1N70"/>
<dbReference type="PDBsum" id="1ZV2"/>
<dbReference type="PDBsum" id="2A3T"/>
<dbReference type="PDBsum" id="2DWS"/>
<dbReference type="PDBsum" id="2DWT"/>
<dbReference type="PDBsum" id="2DY2"/>
<dbReference type="SMR" id="Q53239"/>
<dbReference type="STRING" id="349102.Rsph17025_1595"/>
<dbReference type="KEGG" id="rsq:Rsph17025_1595"/>
<dbReference type="eggNOG" id="COG2132">
    <property type="taxonomic scope" value="Bacteria"/>
</dbReference>
<dbReference type="HOGENOM" id="CLU_031740_1_0_5"/>
<dbReference type="BioCyc" id="RSPH349102:G1G8M-1642-MONOMER"/>
<dbReference type="UniPathway" id="UPA00652">
    <property type="reaction ID" value="UER00707"/>
</dbReference>
<dbReference type="EvolutionaryTrace" id="Q53239"/>
<dbReference type="GO" id="GO:0042597">
    <property type="term" value="C:periplasmic space"/>
    <property type="evidence" value="ECO:0007669"/>
    <property type="project" value="UniProtKB-SubCell"/>
</dbReference>
<dbReference type="GO" id="GO:0005507">
    <property type="term" value="F:copper ion binding"/>
    <property type="evidence" value="ECO:0007669"/>
    <property type="project" value="InterPro"/>
</dbReference>
<dbReference type="GO" id="GO:0050421">
    <property type="term" value="F:nitrite reductase (NO-forming) activity"/>
    <property type="evidence" value="ECO:0007669"/>
    <property type="project" value="UniProtKB-EC"/>
</dbReference>
<dbReference type="GO" id="GO:0019333">
    <property type="term" value="P:denitrification pathway"/>
    <property type="evidence" value="ECO:0007669"/>
    <property type="project" value="UniProtKB-UniPathway"/>
</dbReference>
<dbReference type="GO" id="GO:0042128">
    <property type="term" value="P:nitrate assimilation"/>
    <property type="evidence" value="ECO:0007669"/>
    <property type="project" value="UniProtKB-KW"/>
</dbReference>
<dbReference type="CDD" id="cd04201">
    <property type="entry name" value="CuRO_1_CuNIR_like"/>
    <property type="match status" value="1"/>
</dbReference>
<dbReference type="CDD" id="cd04208">
    <property type="entry name" value="CuRO_2_CuNIR"/>
    <property type="match status" value="1"/>
</dbReference>
<dbReference type="Gene3D" id="2.60.40.420">
    <property type="entry name" value="Cupredoxins - blue copper proteins"/>
    <property type="match status" value="2"/>
</dbReference>
<dbReference type="InterPro" id="IPR011707">
    <property type="entry name" value="Cu-oxidase-like_N"/>
</dbReference>
<dbReference type="InterPro" id="IPR001117">
    <property type="entry name" value="Cu-oxidase_2nd"/>
</dbReference>
<dbReference type="InterPro" id="IPR008972">
    <property type="entry name" value="Cupredoxin"/>
</dbReference>
<dbReference type="InterPro" id="IPR001287">
    <property type="entry name" value="NO2-reductase_Cu"/>
</dbReference>
<dbReference type="InterPro" id="IPR006311">
    <property type="entry name" value="TAT_signal"/>
</dbReference>
<dbReference type="NCBIfam" id="TIGR02376">
    <property type="entry name" value="Cu_nitrite_red"/>
    <property type="match status" value="1"/>
</dbReference>
<dbReference type="Pfam" id="PF00394">
    <property type="entry name" value="Cu-oxidase"/>
    <property type="match status" value="1"/>
</dbReference>
<dbReference type="Pfam" id="PF07732">
    <property type="entry name" value="Cu-oxidase_3"/>
    <property type="match status" value="1"/>
</dbReference>
<dbReference type="PRINTS" id="PR00695">
    <property type="entry name" value="CUNO2RDTASE"/>
</dbReference>
<dbReference type="SUPFAM" id="SSF49503">
    <property type="entry name" value="Cupredoxins"/>
    <property type="match status" value="2"/>
</dbReference>
<dbReference type="PROSITE" id="PS51318">
    <property type="entry name" value="TAT"/>
    <property type="match status" value="1"/>
</dbReference>
<proteinExistence type="evidence at protein level"/>
<protein>
    <recommendedName>
        <fullName>Copper-containing nitrite reductase</fullName>
        <ecNumber>1.7.2.1</ecNumber>
    </recommendedName>
    <alternativeName>
        <fullName>Cu-NIR</fullName>
    </alternativeName>
</protein>
<name>NIR_CERS5</name>
<keyword id="KW-0002">3D-structure</keyword>
<keyword id="KW-0186">Copper</keyword>
<keyword id="KW-0274">FAD</keyword>
<keyword id="KW-0285">Flavoprotein</keyword>
<keyword id="KW-0479">Metal-binding</keyword>
<keyword id="KW-0534">Nitrate assimilation</keyword>
<keyword id="KW-0560">Oxidoreductase</keyword>
<keyword id="KW-0574">Periplasm</keyword>
<keyword id="KW-0677">Repeat</keyword>
<keyword id="KW-0732">Signal</keyword>
<gene>
    <name type="primary">nirK</name>
    <name type="ordered locus">Rsph17025_1595</name>
</gene>
<organism>
    <name type="scientific">Cereibacter sphaeroides (strain ATCC 17025 / ATH 2.4.3)</name>
    <name type="common">Rhodobacter sphaeroides</name>
    <dbReference type="NCBI Taxonomy" id="349102"/>
    <lineage>
        <taxon>Bacteria</taxon>
        <taxon>Pseudomonadati</taxon>
        <taxon>Pseudomonadota</taxon>
        <taxon>Alphaproteobacteria</taxon>
        <taxon>Rhodobacterales</taxon>
        <taxon>Paracoccaceae</taxon>
        <taxon>Cereibacter</taxon>
    </lineage>
</organism>
<evidence type="ECO:0000250" key="1"/>
<evidence type="ECO:0000255" key="2">
    <source>
        <dbReference type="PROSITE-ProRule" id="PRU00648"/>
    </source>
</evidence>
<evidence type="ECO:0000305" key="3"/>
<evidence type="ECO:0007829" key="4">
    <source>
        <dbReference type="PDB" id="1MZY"/>
    </source>
</evidence>
<evidence type="ECO:0007829" key="5">
    <source>
        <dbReference type="PDB" id="1MZZ"/>
    </source>
</evidence>
<evidence type="ECO:0007829" key="6">
    <source>
        <dbReference type="PDB" id="2DY2"/>
    </source>
</evidence>
<feature type="signal peptide" description="Tat-type signal" evidence="2">
    <location>
        <begin position="1"/>
        <end position="31"/>
    </location>
</feature>
<feature type="chain" id="PRO_0000002992" description="Copper-containing nitrite reductase">
    <location>
        <begin position="32"/>
        <end position="374"/>
    </location>
</feature>
<feature type="domain" description="Plastocyanin-like 1">
    <location>
        <begin position="93"/>
        <end position="189"/>
    </location>
</feature>
<feature type="domain" description="Plastocyanin-like 2">
    <location>
        <begin position="254"/>
        <end position="355"/>
    </location>
</feature>
<feature type="binding site" description="type 1 copper site" evidence="1">
    <location>
        <position position="126"/>
    </location>
    <ligand>
        <name>Cu cation</name>
        <dbReference type="ChEBI" id="CHEBI:23378"/>
        <label>1</label>
    </ligand>
</feature>
<feature type="binding site" description="type 2 copper site" evidence="1">
    <location>
        <position position="131"/>
    </location>
    <ligand>
        <name>Cu cation</name>
        <dbReference type="ChEBI" id="CHEBI:23378"/>
        <label>2</label>
    </ligand>
</feature>
<feature type="binding site" description="type 2 copper site" evidence="1">
    <location>
        <position position="166"/>
    </location>
    <ligand>
        <name>Cu cation</name>
        <dbReference type="ChEBI" id="CHEBI:23378"/>
        <label>2</label>
    </ligand>
</feature>
<feature type="binding site" description="type 1 copper site" evidence="1">
    <location>
        <position position="167"/>
    </location>
    <ligand>
        <name>Cu cation</name>
        <dbReference type="ChEBI" id="CHEBI:23378"/>
        <label>1</label>
    </ligand>
</feature>
<feature type="binding site" description="type 1 copper site" evidence="1">
    <location>
        <position position="177"/>
    </location>
    <ligand>
        <name>Cu cation</name>
        <dbReference type="ChEBI" id="CHEBI:23378"/>
        <label>1</label>
    </ligand>
</feature>
<feature type="binding site" description="type 1 copper site" evidence="1">
    <location>
        <position position="182"/>
    </location>
    <ligand>
        <name>Cu cation</name>
        <dbReference type="ChEBI" id="CHEBI:23378"/>
        <label>1</label>
    </ligand>
</feature>
<feature type="binding site" description="type 2 copper site" evidence="1">
    <location>
        <position position="338"/>
    </location>
    <ligand>
        <name>Cu cation</name>
        <dbReference type="ChEBI" id="CHEBI:23378"/>
        <label>2</label>
    </ligand>
</feature>
<feature type="sequence conflict" description="In Ref. 1; AAB05767." evidence="3" ref="1">
    <original>E</original>
    <variation>Q</variation>
    <location>
        <position position="27"/>
    </location>
</feature>
<feature type="sequence conflict" description="In Ref. 1; AAB05767." evidence="3" ref="1">
    <original>D</original>
    <variation>T</variation>
    <location>
        <position position="230"/>
    </location>
</feature>
<feature type="sequence conflict" description="In Ref. 1; AAB05767." evidence="3" ref="1">
    <original>N</original>
    <variation>K</variation>
    <location>
        <position position="281"/>
    </location>
</feature>
<feature type="sequence conflict" description="In Ref. 1; AAB05767." evidence="3" ref="1">
    <original>S</original>
    <variation>T</variation>
    <location>
        <position position="319"/>
    </location>
</feature>
<feature type="sequence conflict" description="In Ref. 1; AAB05767." evidence="3" ref="1">
    <original>H</original>
    <variation>S</variation>
    <location>
        <position position="351"/>
    </location>
</feature>
<feature type="sequence conflict" description="In Ref. 1; AAB05767." evidence="3" ref="1">
    <original>VA</original>
    <variation>WP</variation>
    <location>
        <begin position="367"/>
        <end position="368"/>
    </location>
</feature>
<feature type="strand" evidence="4">
    <location>
        <begin position="46"/>
        <end position="48"/>
    </location>
</feature>
<feature type="strand" evidence="4">
    <location>
        <begin position="65"/>
        <end position="67"/>
    </location>
</feature>
<feature type="strand" evidence="4">
    <location>
        <begin position="70"/>
        <end position="85"/>
    </location>
</feature>
<feature type="strand" evidence="4">
    <location>
        <begin position="88"/>
        <end position="95"/>
    </location>
</feature>
<feature type="strand" evidence="4">
    <location>
        <begin position="98"/>
        <end position="100"/>
    </location>
</feature>
<feature type="strand" evidence="4">
    <location>
        <begin position="103"/>
        <end position="107"/>
    </location>
</feature>
<feature type="strand" evidence="4">
    <location>
        <begin position="111"/>
        <end position="118"/>
    </location>
</feature>
<feature type="helix" evidence="4">
    <location>
        <begin position="136"/>
        <end position="142"/>
    </location>
</feature>
<feature type="strand" evidence="4">
    <location>
        <begin position="149"/>
        <end position="156"/>
    </location>
</feature>
<feature type="strand" evidence="4">
    <location>
        <begin position="161"/>
        <end position="166"/>
    </location>
</feature>
<feature type="helix" evidence="4">
    <location>
        <begin position="173"/>
        <end position="179"/>
    </location>
</feature>
<feature type="strand" evidence="4">
    <location>
        <begin position="183"/>
        <end position="189"/>
    </location>
</feature>
<feature type="strand" evidence="4">
    <location>
        <begin position="205"/>
        <end position="215"/>
    </location>
</feature>
<feature type="strand" evidence="6">
    <location>
        <begin position="223"/>
        <end position="225"/>
    </location>
</feature>
<feature type="helix" evidence="4">
    <location>
        <begin position="231"/>
        <end position="242"/>
    </location>
</feature>
<feature type="turn" evidence="4">
    <location>
        <begin position="243"/>
        <end position="245"/>
    </location>
</feature>
<feature type="strand" evidence="4">
    <location>
        <begin position="248"/>
        <end position="252"/>
    </location>
</feature>
<feature type="turn" evidence="4">
    <location>
        <begin position="256"/>
        <end position="259"/>
    </location>
</feature>
<feature type="helix" evidence="4">
    <location>
        <begin position="261"/>
        <end position="263"/>
    </location>
</feature>
<feature type="strand" evidence="4">
    <location>
        <begin position="265"/>
        <end position="268"/>
    </location>
</feature>
<feature type="strand" evidence="4">
    <location>
        <begin position="272"/>
        <end position="282"/>
    </location>
</feature>
<feature type="strand" evidence="4">
    <location>
        <begin position="286"/>
        <end position="289"/>
    </location>
</feature>
<feature type="strand" evidence="4">
    <location>
        <begin position="293"/>
        <end position="297"/>
    </location>
</feature>
<feature type="strand" evidence="4">
    <location>
        <begin position="307"/>
        <end position="312"/>
    </location>
</feature>
<feature type="strand" evidence="4">
    <location>
        <begin position="319"/>
        <end position="326"/>
    </location>
</feature>
<feature type="strand" evidence="4">
    <location>
        <begin position="331"/>
        <end position="339"/>
    </location>
</feature>
<feature type="helix" evidence="4">
    <location>
        <begin position="340"/>
        <end position="344"/>
    </location>
</feature>
<feature type="strand" evidence="4">
    <location>
        <begin position="349"/>
        <end position="356"/>
    </location>
</feature>
<feature type="turn" evidence="4">
    <location>
        <begin position="360"/>
        <end position="362"/>
    </location>
</feature>
<feature type="strand" evidence="5">
    <location>
        <begin position="363"/>
        <end position="371"/>
    </location>
</feature>